<reference key="1">
    <citation type="journal article" date="2000" name="Nature">
        <title>Sequence and analysis of chromosome 1 of the plant Arabidopsis thaliana.</title>
        <authorList>
            <person name="Theologis A."/>
            <person name="Ecker J.R."/>
            <person name="Palm C.J."/>
            <person name="Federspiel N.A."/>
            <person name="Kaul S."/>
            <person name="White O."/>
            <person name="Alonso J."/>
            <person name="Altafi H."/>
            <person name="Araujo R."/>
            <person name="Bowman C.L."/>
            <person name="Brooks S.Y."/>
            <person name="Buehler E."/>
            <person name="Chan A."/>
            <person name="Chao Q."/>
            <person name="Chen H."/>
            <person name="Cheuk R.F."/>
            <person name="Chin C.W."/>
            <person name="Chung M.K."/>
            <person name="Conn L."/>
            <person name="Conway A.B."/>
            <person name="Conway A.R."/>
            <person name="Creasy T.H."/>
            <person name="Dewar K."/>
            <person name="Dunn P."/>
            <person name="Etgu P."/>
            <person name="Feldblyum T.V."/>
            <person name="Feng J.-D."/>
            <person name="Fong B."/>
            <person name="Fujii C.Y."/>
            <person name="Gill J.E."/>
            <person name="Goldsmith A.D."/>
            <person name="Haas B."/>
            <person name="Hansen N.F."/>
            <person name="Hughes B."/>
            <person name="Huizar L."/>
            <person name="Hunter J.L."/>
            <person name="Jenkins J."/>
            <person name="Johnson-Hopson C."/>
            <person name="Khan S."/>
            <person name="Khaykin E."/>
            <person name="Kim C.J."/>
            <person name="Koo H.L."/>
            <person name="Kremenetskaia I."/>
            <person name="Kurtz D.B."/>
            <person name="Kwan A."/>
            <person name="Lam B."/>
            <person name="Langin-Hooper S."/>
            <person name="Lee A."/>
            <person name="Lee J.M."/>
            <person name="Lenz C.A."/>
            <person name="Li J.H."/>
            <person name="Li Y.-P."/>
            <person name="Lin X."/>
            <person name="Liu S.X."/>
            <person name="Liu Z.A."/>
            <person name="Luros J.S."/>
            <person name="Maiti R."/>
            <person name="Marziali A."/>
            <person name="Militscher J."/>
            <person name="Miranda M."/>
            <person name="Nguyen M."/>
            <person name="Nierman W.C."/>
            <person name="Osborne B.I."/>
            <person name="Pai G."/>
            <person name="Peterson J."/>
            <person name="Pham P.K."/>
            <person name="Rizzo M."/>
            <person name="Rooney T."/>
            <person name="Rowley D."/>
            <person name="Sakano H."/>
            <person name="Salzberg S.L."/>
            <person name="Schwartz J.R."/>
            <person name="Shinn P."/>
            <person name="Southwick A.M."/>
            <person name="Sun H."/>
            <person name="Tallon L.J."/>
            <person name="Tambunga G."/>
            <person name="Toriumi M.J."/>
            <person name="Town C.D."/>
            <person name="Utterback T."/>
            <person name="Van Aken S."/>
            <person name="Vaysberg M."/>
            <person name="Vysotskaia V.S."/>
            <person name="Walker M."/>
            <person name="Wu D."/>
            <person name="Yu G."/>
            <person name="Fraser C.M."/>
            <person name="Venter J.C."/>
            <person name="Davis R.W."/>
        </authorList>
    </citation>
    <scope>NUCLEOTIDE SEQUENCE [LARGE SCALE GENOMIC DNA]</scope>
    <source>
        <strain>cv. Columbia</strain>
    </source>
</reference>
<reference key="2">
    <citation type="journal article" date="2017" name="Plant J.">
        <title>Araport11: a complete reannotation of the Arabidopsis thaliana reference genome.</title>
        <authorList>
            <person name="Cheng C.Y."/>
            <person name="Krishnakumar V."/>
            <person name="Chan A.P."/>
            <person name="Thibaud-Nissen F."/>
            <person name="Schobel S."/>
            <person name="Town C.D."/>
        </authorList>
    </citation>
    <scope>GENOME REANNOTATION</scope>
    <source>
        <strain>cv. Columbia</strain>
    </source>
</reference>
<reference key="3">
    <citation type="journal article" date="2004" name="Plant Physiol.">
        <title>A transcriptomic and proteomic characterization of the Arabidopsis mitochondrial protein import apparatus and its response to mitochondrial dysfunction.</title>
        <authorList>
            <person name="Lister R."/>
            <person name="Chew O."/>
            <person name="Lee M.N."/>
            <person name="Heazlewood J.L."/>
            <person name="Clifton R."/>
            <person name="Parker K.L."/>
            <person name="Millar A.H."/>
            <person name="Whelan J."/>
        </authorList>
    </citation>
    <scope>TISSUE SPECIFICITY</scope>
    <scope>INDUCTION</scope>
</reference>
<reference key="4">
    <citation type="journal article" date="2012" name="Mol. Cell. Proteomics">
        <title>Comparative large-scale characterisation of plant vs. mammal proteins reveals similar and idiosyncratic N-alpha acetylation features.</title>
        <authorList>
            <person name="Bienvenut W.V."/>
            <person name="Sumpton D."/>
            <person name="Martinez A."/>
            <person name="Lilla S."/>
            <person name="Espagne C."/>
            <person name="Meinnel T."/>
            <person name="Giglione C."/>
        </authorList>
    </citation>
    <scope>ACETYLATION [LARGE SCALE ANALYSIS] AT MET-1</scope>
    <scope>IDENTIFICATION BY MASS SPECTROMETRY [LARGE SCALE ANALYSIS]</scope>
</reference>
<feature type="chain" id="PRO_0000051532" description="Probable mitochondrial import receptor subunit TOM40-2">
    <location>
        <begin position="1"/>
        <end position="310"/>
    </location>
</feature>
<feature type="modified residue" description="N-acetylmethionine" evidence="8">
    <location>
        <position position="1"/>
    </location>
</feature>
<name>TO402_ARATH</name>
<comment type="function">
    <text evidence="1">Central component of the receptor complex responsible for the recognition and translocation of cytosolically synthesized mitochondrial preproteins. Together with TOM22 functions as the transit peptide receptor at the surface of the mitochondrion outer membrane and facilitates the movement of preproteins into the translocation pore. Directly involved in the pore formation (By similarity).</text>
</comment>
<comment type="subunit">
    <text evidence="2">Forms part of the preprotein translocase complex of the outer mitochondrial membrane (TOM complex) which consists of at least 6 different proteins (TOM5, TOM6, TOM7, TOM20, TOM22/TOM9 and TOM40) (By similarity). Present in a large lipid-enriched complex called mitochondrial transmembrane lipoprotein (MTL) complex made of proteins located in the two mitochondrial membranes, including the TOM complex and the core components of the MICOS complex and containing at least digalactosyldiacylglycerol (DGDG) (By similarity). Binds to MIC60 (By similarity). Component of a mitochondrial large protein complex that contains, at least, MIC60, DGS1, TOM40, TOM20 proteins, and petC/RISP (By similarity).</text>
</comment>
<comment type="subcellular location">
    <subcellularLocation>
        <location evidence="2">Mitochondrion outer membrane</location>
        <topology evidence="2">Multi-pass membrane protein</topology>
    </subcellularLocation>
</comment>
<comment type="tissue specificity">
    <text evidence="3">Expressed in roots, flowers, young cotyledons and leaves.</text>
</comment>
<comment type="induction">
    <text evidence="3">Up-regulated after antimycin A or rotenone treatments.</text>
</comment>
<comment type="similarity">
    <text evidence="5">Belongs to the Tom40 family.</text>
</comment>
<comment type="sequence caution" evidence="5">
    <conflict type="erroneous gene model prediction">
        <sequence resource="EMBL-CDS" id="AAD50049"/>
    </conflict>
</comment>
<accession>Q9SX55</accession>
<gene>
    <name evidence="4" type="primary">TOM40-2</name>
    <name evidence="6" type="ordered locus">At1g50400</name>
    <name evidence="7" type="ORF">F14I3.2</name>
</gene>
<organism>
    <name type="scientific">Arabidopsis thaliana</name>
    <name type="common">Mouse-ear cress</name>
    <dbReference type="NCBI Taxonomy" id="3702"/>
    <lineage>
        <taxon>Eukaryota</taxon>
        <taxon>Viridiplantae</taxon>
        <taxon>Streptophyta</taxon>
        <taxon>Embryophyta</taxon>
        <taxon>Tracheophyta</taxon>
        <taxon>Spermatophyta</taxon>
        <taxon>Magnoliopsida</taxon>
        <taxon>eudicotyledons</taxon>
        <taxon>Gunneridae</taxon>
        <taxon>Pentapetalae</taxon>
        <taxon>rosids</taxon>
        <taxon>malvids</taxon>
        <taxon>Brassicales</taxon>
        <taxon>Brassicaceae</taxon>
        <taxon>Camelineae</taxon>
        <taxon>Arabidopsis</taxon>
    </lineage>
</organism>
<proteinExistence type="evidence at protein level"/>
<sequence>MEGFSPPINTAQVDAKTKLDEKVDYSNLPCPVLYEELNREATMALKPELFEGFRLDYNKSLNQKFFLSHSILMGPTEVPNPTPSSEIIKIPTANYDFGAGFIDPKLYLIGRITTDGRLNARAKFDLTDNFSVKANALLTDEEDKSQGHLVIDYKGSDYRTQLQLGNNSVYAANYIQHVTPHLSLGGEAFWLGQQLMSGVGYAARYETDKTVASGQIASTGVAVMNYVHKVSEKLSFATDFIYNYLSRDVTASVGYDLITRQSRLRGKVDSNGVVAAYLEEQLPIGLRFLLSAEVDHVKKDYKFGFGVNAF</sequence>
<keyword id="KW-0007">Acetylation</keyword>
<keyword id="KW-0406">Ion transport</keyword>
<keyword id="KW-0472">Membrane</keyword>
<keyword id="KW-0496">Mitochondrion</keyword>
<keyword id="KW-1000">Mitochondrion outer membrane</keyword>
<keyword id="KW-0626">Porin</keyword>
<keyword id="KW-0653">Protein transport</keyword>
<keyword id="KW-1185">Reference proteome</keyword>
<keyword id="KW-0812">Transmembrane</keyword>
<keyword id="KW-1134">Transmembrane beta strand</keyword>
<keyword id="KW-0813">Transport</keyword>
<evidence type="ECO:0000250" key="1"/>
<evidence type="ECO:0000250" key="2">
    <source>
        <dbReference type="UniProtKB" id="Q9LHE5"/>
    </source>
</evidence>
<evidence type="ECO:0000269" key="3">
    <source>
    </source>
</evidence>
<evidence type="ECO:0000303" key="4">
    <source>
    </source>
</evidence>
<evidence type="ECO:0000305" key="5"/>
<evidence type="ECO:0000312" key="6">
    <source>
        <dbReference type="Araport" id="AT1G50400"/>
    </source>
</evidence>
<evidence type="ECO:0000312" key="7">
    <source>
        <dbReference type="EMBL" id="AAD50049.2"/>
    </source>
</evidence>
<evidence type="ECO:0007744" key="8">
    <source>
    </source>
</evidence>
<protein>
    <recommendedName>
        <fullName evidence="4">Probable mitochondrial import receptor subunit TOM40-2</fullName>
    </recommendedName>
    <alternativeName>
        <fullName evidence="4">Translocase of outer membrane 40 kDa subunit homolog 2</fullName>
    </alternativeName>
</protein>
<dbReference type="EMBL" id="AC007980">
    <property type="protein sequence ID" value="AAD50049.2"/>
    <property type="status" value="ALT_SEQ"/>
    <property type="molecule type" value="Genomic_DNA"/>
</dbReference>
<dbReference type="EMBL" id="CP002684">
    <property type="protein sequence ID" value="AEE32544.1"/>
    <property type="molecule type" value="Genomic_DNA"/>
</dbReference>
<dbReference type="PIR" id="C96540">
    <property type="entry name" value="C96540"/>
</dbReference>
<dbReference type="RefSeq" id="NP_175457.1">
    <property type="nucleotide sequence ID" value="NM_103923.3"/>
</dbReference>
<dbReference type="SMR" id="Q9SX55"/>
<dbReference type="FunCoup" id="Q9SX55">
    <property type="interactions" value="2917"/>
</dbReference>
<dbReference type="STRING" id="3702.Q9SX55"/>
<dbReference type="TCDB" id="1.B.8.2.3">
    <property type="family name" value="the mitochondrial and plastid porin (mpp) family"/>
</dbReference>
<dbReference type="GlyGen" id="Q9SX55">
    <property type="glycosylation" value="1 site"/>
</dbReference>
<dbReference type="iPTMnet" id="Q9SX55"/>
<dbReference type="PaxDb" id="3702-AT1G50400.1"/>
<dbReference type="ProteomicsDB" id="234620"/>
<dbReference type="DNASU" id="841462"/>
<dbReference type="EnsemblPlants" id="AT1G50400.1">
    <property type="protein sequence ID" value="AT1G50400.1"/>
    <property type="gene ID" value="AT1G50400"/>
</dbReference>
<dbReference type="GeneID" id="841462"/>
<dbReference type="Gramene" id="AT1G50400.1">
    <property type="protein sequence ID" value="AT1G50400.1"/>
    <property type="gene ID" value="AT1G50400"/>
</dbReference>
<dbReference type="KEGG" id="ath:AT1G50400"/>
<dbReference type="Araport" id="AT1G50400"/>
<dbReference type="TAIR" id="AT1G50400"/>
<dbReference type="eggNOG" id="KOG3296">
    <property type="taxonomic scope" value="Eukaryota"/>
</dbReference>
<dbReference type="HOGENOM" id="CLU_042174_1_0_1"/>
<dbReference type="InParanoid" id="Q9SX55"/>
<dbReference type="OMA" id="AVMNYVH"/>
<dbReference type="OrthoDB" id="19656at2759"/>
<dbReference type="PhylomeDB" id="Q9SX55"/>
<dbReference type="PRO" id="PR:Q9SX55"/>
<dbReference type="Proteomes" id="UP000006548">
    <property type="component" value="Chromosome 1"/>
</dbReference>
<dbReference type="ExpressionAtlas" id="Q9SX55">
    <property type="expression patterns" value="baseline and differential"/>
</dbReference>
<dbReference type="GO" id="GO:0005741">
    <property type="term" value="C:mitochondrial outer membrane"/>
    <property type="evidence" value="ECO:0007669"/>
    <property type="project" value="UniProtKB-SubCell"/>
</dbReference>
<dbReference type="GO" id="GO:0046930">
    <property type="term" value="C:pore complex"/>
    <property type="evidence" value="ECO:0007669"/>
    <property type="project" value="UniProtKB-KW"/>
</dbReference>
<dbReference type="GO" id="GO:0015288">
    <property type="term" value="F:porin activity"/>
    <property type="evidence" value="ECO:0007669"/>
    <property type="project" value="UniProtKB-KW"/>
</dbReference>
<dbReference type="GO" id="GO:0008320">
    <property type="term" value="F:protein transmembrane transporter activity"/>
    <property type="evidence" value="ECO:0007669"/>
    <property type="project" value="InterPro"/>
</dbReference>
<dbReference type="GO" id="GO:0006811">
    <property type="term" value="P:monoatomic ion transport"/>
    <property type="evidence" value="ECO:0007669"/>
    <property type="project" value="UniProtKB-KW"/>
</dbReference>
<dbReference type="GO" id="GO:0030150">
    <property type="term" value="P:protein import into mitochondrial matrix"/>
    <property type="evidence" value="ECO:0007669"/>
    <property type="project" value="InterPro"/>
</dbReference>
<dbReference type="CDD" id="cd07305">
    <property type="entry name" value="Porin3_Tom40"/>
    <property type="match status" value="1"/>
</dbReference>
<dbReference type="FunFam" id="2.40.160.10:FF:000010">
    <property type="entry name" value="Mitochondrial import receptor subunit TOM40-1"/>
    <property type="match status" value="1"/>
</dbReference>
<dbReference type="Gene3D" id="2.40.160.10">
    <property type="entry name" value="Porin"/>
    <property type="match status" value="1"/>
</dbReference>
<dbReference type="InterPro" id="IPR023614">
    <property type="entry name" value="Porin_dom_sf"/>
</dbReference>
<dbReference type="InterPro" id="IPR027246">
    <property type="entry name" value="Porin_Euk/Tom40"/>
</dbReference>
<dbReference type="InterPro" id="IPR037930">
    <property type="entry name" value="Tom40"/>
</dbReference>
<dbReference type="PANTHER" id="PTHR10802">
    <property type="entry name" value="MITOCHONDRIAL IMPORT RECEPTOR SUBUNIT TOM40"/>
    <property type="match status" value="1"/>
</dbReference>
<dbReference type="Pfam" id="PF01459">
    <property type="entry name" value="Porin_3"/>
    <property type="match status" value="1"/>
</dbReference>